<protein>
    <recommendedName>
        <fullName evidence="1">Adenylate kinase</fullName>
        <shortName evidence="1">AK</shortName>
        <ecNumber evidence="1">2.7.4.3</ecNumber>
    </recommendedName>
    <alternativeName>
        <fullName evidence="1">ATP-AMP transphosphorylase</fullName>
    </alternativeName>
    <alternativeName>
        <fullName evidence="1">ATP:AMP phosphotransferase</fullName>
    </alternativeName>
    <alternativeName>
        <fullName evidence="1">Adenylate monophosphate kinase</fullName>
    </alternativeName>
</protein>
<keyword id="KW-0067">ATP-binding</keyword>
<keyword id="KW-0963">Cytoplasm</keyword>
<keyword id="KW-0418">Kinase</keyword>
<keyword id="KW-0545">Nucleotide biosynthesis</keyword>
<keyword id="KW-0547">Nucleotide-binding</keyword>
<keyword id="KW-0808">Transferase</keyword>
<evidence type="ECO:0000255" key="1">
    <source>
        <dbReference type="HAMAP-Rule" id="MF_00235"/>
    </source>
</evidence>
<accession>Q72I25</accession>
<dbReference type="EC" id="2.7.4.3" evidence="1"/>
<dbReference type="EMBL" id="AE017221">
    <property type="protein sequence ID" value="AAS81649.1"/>
    <property type="molecule type" value="Genomic_DNA"/>
</dbReference>
<dbReference type="RefSeq" id="WP_011173701.1">
    <property type="nucleotide sequence ID" value="NC_005835.1"/>
</dbReference>
<dbReference type="SMR" id="Q72I25"/>
<dbReference type="GeneID" id="3169825"/>
<dbReference type="KEGG" id="tth:TT_C1307"/>
<dbReference type="eggNOG" id="COG0563">
    <property type="taxonomic scope" value="Bacteria"/>
</dbReference>
<dbReference type="HOGENOM" id="CLU_032354_4_1_0"/>
<dbReference type="OrthoDB" id="9805030at2"/>
<dbReference type="UniPathway" id="UPA00588">
    <property type="reaction ID" value="UER00649"/>
</dbReference>
<dbReference type="Proteomes" id="UP000000592">
    <property type="component" value="Chromosome"/>
</dbReference>
<dbReference type="GO" id="GO:0005737">
    <property type="term" value="C:cytoplasm"/>
    <property type="evidence" value="ECO:0007669"/>
    <property type="project" value="UniProtKB-SubCell"/>
</dbReference>
<dbReference type="GO" id="GO:0004017">
    <property type="term" value="F:adenylate kinase activity"/>
    <property type="evidence" value="ECO:0007669"/>
    <property type="project" value="UniProtKB-UniRule"/>
</dbReference>
<dbReference type="GO" id="GO:0005524">
    <property type="term" value="F:ATP binding"/>
    <property type="evidence" value="ECO:0007669"/>
    <property type="project" value="UniProtKB-UniRule"/>
</dbReference>
<dbReference type="GO" id="GO:0044209">
    <property type="term" value="P:AMP salvage"/>
    <property type="evidence" value="ECO:0007669"/>
    <property type="project" value="UniProtKB-UniRule"/>
</dbReference>
<dbReference type="CDD" id="cd01428">
    <property type="entry name" value="ADK"/>
    <property type="match status" value="1"/>
</dbReference>
<dbReference type="Gene3D" id="3.40.50.300">
    <property type="entry name" value="P-loop containing nucleotide triphosphate hydrolases"/>
    <property type="match status" value="1"/>
</dbReference>
<dbReference type="HAMAP" id="MF_00235">
    <property type="entry name" value="Adenylate_kinase_Adk"/>
    <property type="match status" value="1"/>
</dbReference>
<dbReference type="InterPro" id="IPR000850">
    <property type="entry name" value="Adenylat/UMP-CMP_kin"/>
</dbReference>
<dbReference type="InterPro" id="IPR033690">
    <property type="entry name" value="Adenylat_kinase_CS"/>
</dbReference>
<dbReference type="InterPro" id="IPR027417">
    <property type="entry name" value="P-loop_NTPase"/>
</dbReference>
<dbReference type="NCBIfam" id="NF001381">
    <property type="entry name" value="PRK00279.1-3"/>
    <property type="match status" value="1"/>
</dbReference>
<dbReference type="NCBIfam" id="NF011100">
    <property type="entry name" value="PRK14527.1"/>
    <property type="match status" value="1"/>
</dbReference>
<dbReference type="NCBIfam" id="NF011104">
    <property type="entry name" value="PRK14531.1"/>
    <property type="match status" value="1"/>
</dbReference>
<dbReference type="NCBIfam" id="NF011105">
    <property type="entry name" value="PRK14532.1"/>
    <property type="match status" value="1"/>
</dbReference>
<dbReference type="PANTHER" id="PTHR23359">
    <property type="entry name" value="NUCLEOTIDE KINASE"/>
    <property type="match status" value="1"/>
</dbReference>
<dbReference type="Pfam" id="PF00406">
    <property type="entry name" value="ADK"/>
    <property type="match status" value="1"/>
</dbReference>
<dbReference type="PRINTS" id="PR00094">
    <property type="entry name" value="ADENYLTKNASE"/>
</dbReference>
<dbReference type="SUPFAM" id="SSF52540">
    <property type="entry name" value="P-loop containing nucleoside triphosphate hydrolases"/>
    <property type="match status" value="1"/>
</dbReference>
<dbReference type="PROSITE" id="PS00113">
    <property type="entry name" value="ADENYLATE_KINASE"/>
    <property type="match status" value="1"/>
</dbReference>
<feature type="chain" id="PRO_0000158875" description="Adenylate kinase">
    <location>
        <begin position="1"/>
        <end position="186"/>
    </location>
</feature>
<feature type="region of interest" description="NMP" evidence="1">
    <location>
        <begin position="34"/>
        <end position="63"/>
    </location>
</feature>
<feature type="region of interest" description="LID" evidence="1">
    <location>
        <begin position="125"/>
        <end position="135"/>
    </location>
</feature>
<feature type="binding site" evidence="1">
    <location>
        <begin position="14"/>
        <end position="19"/>
    </location>
    <ligand>
        <name>ATP</name>
        <dbReference type="ChEBI" id="CHEBI:30616"/>
    </ligand>
</feature>
<feature type="binding site" evidence="1">
    <location>
        <position position="35"/>
    </location>
    <ligand>
        <name>AMP</name>
        <dbReference type="ChEBI" id="CHEBI:456215"/>
    </ligand>
</feature>
<feature type="binding site" evidence="1">
    <location>
        <position position="40"/>
    </location>
    <ligand>
        <name>AMP</name>
        <dbReference type="ChEBI" id="CHEBI:456215"/>
    </ligand>
</feature>
<feature type="binding site" evidence="1">
    <location>
        <begin position="61"/>
        <end position="63"/>
    </location>
    <ligand>
        <name>AMP</name>
        <dbReference type="ChEBI" id="CHEBI:456215"/>
    </ligand>
</feature>
<feature type="binding site" evidence="1">
    <location>
        <begin position="84"/>
        <end position="87"/>
    </location>
    <ligand>
        <name>AMP</name>
        <dbReference type="ChEBI" id="CHEBI:456215"/>
    </ligand>
</feature>
<feature type="binding site" evidence="1">
    <location>
        <position position="91"/>
    </location>
    <ligand>
        <name>AMP</name>
        <dbReference type="ChEBI" id="CHEBI:456215"/>
    </ligand>
</feature>
<feature type="binding site" evidence="1">
    <location>
        <position position="126"/>
    </location>
    <ligand>
        <name>ATP</name>
        <dbReference type="ChEBI" id="CHEBI:30616"/>
    </ligand>
</feature>
<feature type="binding site" evidence="1">
    <location>
        <position position="132"/>
    </location>
    <ligand>
        <name>AMP</name>
        <dbReference type="ChEBI" id="CHEBI:456215"/>
    </ligand>
</feature>
<feature type="binding site" evidence="1">
    <location>
        <position position="143"/>
    </location>
    <ligand>
        <name>AMP</name>
        <dbReference type="ChEBI" id="CHEBI:456215"/>
    </ligand>
</feature>
<feature type="binding site" evidence="1">
    <location>
        <position position="171"/>
    </location>
    <ligand>
        <name>ATP</name>
        <dbReference type="ChEBI" id="CHEBI:30616"/>
    </ligand>
</feature>
<organism>
    <name type="scientific">Thermus thermophilus (strain ATCC BAA-163 / DSM 7039 / HB27)</name>
    <dbReference type="NCBI Taxonomy" id="262724"/>
    <lineage>
        <taxon>Bacteria</taxon>
        <taxon>Thermotogati</taxon>
        <taxon>Deinococcota</taxon>
        <taxon>Deinococci</taxon>
        <taxon>Thermales</taxon>
        <taxon>Thermaceae</taxon>
        <taxon>Thermus</taxon>
    </lineage>
</organism>
<comment type="function">
    <text evidence="1">Catalyzes the reversible transfer of the terminal phosphate group between ATP and AMP. Plays an important role in cellular energy homeostasis and in adenine nucleotide metabolism.</text>
</comment>
<comment type="catalytic activity">
    <reaction evidence="1">
        <text>AMP + ATP = 2 ADP</text>
        <dbReference type="Rhea" id="RHEA:12973"/>
        <dbReference type="ChEBI" id="CHEBI:30616"/>
        <dbReference type="ChEBI" id="CHEBI:456215"/>
        <dbReference type="ChEBI" id="CHEBI:456216"/>
        <dbReference type="EC" id="2.7.4.3"/>
    </reaction>
</comment>
<comment type="pathway">
    <text evidence="1">Purine metabolism; AMP biosynthesis via salvage pathway; AMP from ADP: step 1/1.</text>
</comment>
<comment type="subunit">
    <text evidence="1">Monomer.</text>
</comment>
<comment type="subcellular location">
    <subcellularLocation>
        <location evidence="1">Cytoplasm</location>
    </subcellularLocation>
</comment>
<comment type="domain">
    <text evidence="1">Consists of three domains, a large central CORE domain and two small peripheral domains, NMPbind and LID, which undergo movements during catalysis. The LID domain closes over the site of phosphoryl transfer upon ATP binding. Assembling and dissambling the active center during each catalytic cycle provides an effective means to prevent ATP hydrolysis.</text>
</comment>
<comment type="similarity">
    <text evidence="1">Belongs to the adenylate kinase family.</text>
</comment>
<gene>
    <name evidence="1" type="primary">adk</name>
    <name type="ordered locus">TT_C1307</name>
</gene>
<reference key="1">
    <citation type="journal article" date="2004" name="Nat. Biotechnol.">
        <title>The genome sequence of the extreme thermophile Thermus thermophilus.</title>
        <authorList>
            <person name="Henne A."/>
            <person name="Brueggemann H."/>
            <person name="Raasch C."/>
            <person name="Wiezer A."/>
            <person name="Hartsch T."/>
            <person name="Liesegang H."/>
            <person name="Johann A."/>
            <person name="Lienard T."/>
            <person name="Gohl O."/>
            <person name="Martinez-Arias R."/>
            <person name="Jacobi C."/>
            <person name="Starkuviene V."/>
            <person name="Schlenczeck S."/>
            <person name="Dencker S."/>
            <person name="Huber R."/>
            <person name="Klenk H.-P."/>
            <person name="Kramer W."/>
            <person name="Merkl R."/>
            <person name="Gottschalk G."/>
            <person name="Fritz H.-J."/>
        </authorList>
    </citation>
    <scope>NUCLEOTIDE SEQUENCE [LARGE SCALE GENOMIC DNA]</scope>
    <source>
        <strain>ATCC BAA-163 / DSM 7039 / HB27</strain>
    </source>
</reference>
<name>KAD_THET2</name>
<sequence length="186" mass="20754">MDVGQAVIFLGPPGAGKGTQASRLAQELGFKKLSTGDILRDHVARGTPLGERVRPIMERGDLVPDDLILELIREELAERVIFDGFPRTLAQAEALDRLLSETGTRLLGVVLVEVPEEELVRRILRRAELEGRSDDNEETVRRRLEVYREKTEPLVGYYEARGVLKRVDGLGTPDEVYARIRAALGI</sequence>
<proteinExistence type="inferred from homology"/>